<reference key="1">
    <citation type="journal article" date="2009" name="ChemBioChem">
        <title>Evolution of nacre: biochemistry and 'shellomics' of the shell organic matrix of the cephalopod Nautilus macromphalus.</title>
        <authorList>
            <person name="Marie B."/>
            <person name="Marin F."/>
            <person name="Marie A."/>
            <person name="Bedouet L."/>
            <person name="Dubost L."/>
            <person name="Alcaraz G."/>
            <person name="Milet C."/>
            <person name="Luquet G."/>
        </authorList>
    </citation>
    <scope>PROTEIN SEQUENCE</scope>
    <scope>TISSUE SPECIFICITY</scope>
    <source>
        <tissue>Shell</tissue>
    </source>
</reference>
<proteinExistence type="evidence at protein level"/>
<accession>P85401</accession>
<protein>
    <recommendedName>
        <fullName evidence="2">Uncharacterized protein IMPP19</fullName>
    </recommendedName>
</protein>
<feature type="chain" id="PRO_0000371480" description="Uncharacterized protein IMPP19">
    <location>
        <begin position="1" status="less than"/>
        <end position="16" status="greater than"/>
    </location>
</feature>
<feature type="unsure residue" description="L or I" evidence="1">
    <location>
        <position position="13"/>
    </location>
</feature>
<feature type="unsure residue" description="L or I" evidence="1">
    <location>
        <position position="14"/>
    </location>
</feature>
<feature type="non-terminal residue" evidence="2">
    <location>
        <position position="1"/>
    </location>
</feature>
<feature type="non-terminal residue" evidence="2">
    <location>
        <position position="16"/>
    </location>
</feature>
<comment type="tissue specificity">
    <text evidence="1">Nacreous layer of shell.</text>
</comment>
<name>IMP19_NAUMA</name>
<keyword id="KW-0903">Direct protein sequencing</keyword>
<sequence>GGGSNFGQFAGGLLDR</sequence>
<organism>
    <name type="scientific">Nautilus macromphalus</name>
    <name type="common">Bellybutton nautilus</name>
    <dbReference type="NCBI Taxonomy" id="34576"/>
    <lineage>
        <taxon>Eukaryota</taxon>
        <taxon>Metazoa</taxon>
        <taxon>Spiralia</taxon>
        <taxon>Lophotrochozoa</taxon>
        <taxon>Mollusca</taxon>
        <taxon>Cephalopoda</taxon>
        <taxon>Nautiloidea</taxon>
        <taxon>Nautilida</taxon>
        <taxon>Nautilidae</taxon>
        <taxon>Nautilus</taxon>
    </lineage>
</organism>
<evidence type="ECO:0000269" key="1">
    <source>
    </source>
</evidence>
<evidence type="ECO:0000303" key="2">
    <source>
    </source>
</evidence>